<keyword id="KW-0238">DNA-binding</keyword>
<keyword id="KW-0479">Metal-binding</keyword>
<keyword id="KW-0539">Nucleus</keyword>
<keyword id="KW-0597">Phosphoprotein</keyword>
<keyword id="KW-1185">Reference proteome</keyword>
<keyword id="KW-0677">Repeat</keyword>
<keyword id="KW-0804">Transcription</keyword>
<keyword id="KW-0805">Transcription regulation</keyword>
<keyword id="KW-0862">Zinc</keyword>
<keyword id="KW-0863">Zinc-finger</keyword>
<protein>
    <recommendedName>
        <fullName evidence="2">Zinc finger protein 692</fullName>
    </recommendedName>
    <alternativeName>
        <fullName evidence="2">AICAR responsive element binding protein</fullName>
    </alternativeName>
</protein>
<dbReference type="EMBL" id="BC126714">
    <property type="protein sequence ID" value="AAI26715.1"/>
    <property type="molecule type" value="mRNA"/>
</dbReference>
<dbReference type="RefSeq" id="NP_001019667.2">
    <property type="nucleotide sequence ID" value="NM_001024496.2"/>
</dbReference>
<dbReference type="RefSeq" id="XP_005209303.1">
    <property type="nucleotide sequence ID" value="XM_005209246.3"/>
</dbReference>
<dbReference type="SMR" id="A0JNJ4"/>
<dbReference type="FunCoup" id="A0JNJ4">
    <property type="interactions" value="1542"/>
</dbReference>
<dbReference type="STRING" id="9913.ENSBTAP00000061888"/>
<dbReference type="PaxDb" id="9913-ENSBTAP00000050696"/>
<dbReference type="GeneID" id="507847"/>
<dbReference type="KEGG" id="bta:507847"/>
<dbReference type="CTD" id="55657"/>
<dbReference type="eggNOG" id="KOG1721">
    <property type="taxonomic scope" value="Eukaryota"/>
</dbReference>
<dbReference type="HOGENOM" id="CLU_045687_1_0_1"/>
<dbReference type="InParanoid" id="A0JNJ4"/>
<dbReference type="OrthoDB" id="8685330at2759"/>
<dbReference type="TreeFam" id="TF332664"/>
<dbReference type="Proteomes" id="UP000009136">
    <property type="component" value="Unplaced"/>
</dbReference>
<dbReference type="GO" id="GO:0005634">
    <property type="term" value="C:nucleus"/>
    <property type="evidence" value="ECO:0007669"/>
    <property type="project" value="UniProtKB-SubCell"/>
</dbReference>
<dbReference type="GO" id="GO:0003700">
    <property type="term" value="F:DNA-binding transcription factor activity"/>
    <property type="evidence" value="ECO:0000318"/>
    <property type="project" value="GO_Central"/>
</dbReference>
<dbReference type="GO" id="GO:0000978">
    <property type="term" value="F:RNA polymerase II cis-regulatory region sequence-specific DNA binding"/>
    <property type="evidence" value="ECO:0000318"/>
    <property type="project" value="GO_Central"/>
</dbReference>
<dbReference type="GO" id="GO:0008270">
    <property type="term" value="F:zinc ion binding"/>
    <property type="evidence" value="ECO:0007669"/>
    <property type="project" value="UniProtKB-KW"/>
</dbReference>
<dbReference type="GO" id="GO:0006111">
    <property type="term" value="P:regulation of gluconeogenesis"/>
    <property type="evidence" value="ECO:0000250"/>
    <property type="project" value="UniProtKB"/>
</dbReference>
<dbReference type="GO" id="GO:0006357">
    <property type="term" value="P:regulation of transcription by RNA polymerase II"/>
    <property type="evidence" value="ECO:0000318"/>
    <property type="project" value="GO_Central"/>
</dbReference>
<dbReference type="FunFam" id="3.30.160.60:FF:000183">
    <property type="entry name" value="E3 ubiquitin-protein ligase ZFP91"/>
    <property type="match status" value="1"/>
</dbReference>
<dbReference type="FunFam" id="3.30.160.60:FF:000511">
    <property type="entry name" value="zinc finger protein 692 isoform X2"/>
    <property type="match status" value="1"/>
</dbReference>
<dbReference type="FunFam" id="3.30.160.60:FF:000577">
    <property type="entry name" value="zinc finger protein 692 isoform X2"/>
    <property type="match status" value="1"/>
</dbReference>
<dbReference type="FunFam" id="3.30.160.60:FF:000598">
    <property type="entry name" value="zinc finger protein 692 isoform X2"/>
    <property type="match status" value="1"/>
</dbReference>
<dbReference type="Gene3D" id="3.30.160.60">
    <property type="entry name" value="Classic Zinc Finger"/>
    <property type="match status" value="5"/>
</dbReference>
<dbReference type="InterPro" id="IPR050888">
    <property type="entry name" value="ZnF_C2H2-type_TF"/>
</dbReference>
<dbReference type="InterPro" id="IPR036236">
    <property type="entry name" value="Znf_C2H2_sf"/>
</dbReference>
<dbReference type="InterPro" id="IPR013087">
    <property type="entry name" value="Znf_C2H2_type"/>
</dbReference>
<dbReference type="PANTHER" id="PTHR24406">
    <property type="entry name" value="TRANSCRIPTIONAL REPRESSOR CTCFL-RELATED"/>
    <property type="match status" value="1"/>
</dbReference>
<dbReference type="Pfam" id="PF00096">
    <property type="entry name" value="zf-C2H2"/>
    <property type="match status" value="4"/>
</dbReference>
<dbReference type="SMART" id="SM00355">
    <property type="entry name" value="ZnF_C2H2"/>
    <property type="match status" value="5"/>
</dbReference>
<dbReference type="SUPFAM" id="SSF57667">
    <property type="entry name" value="beta-beta-alpha zinc fingers"/>
    <property type="match status" value="3"/>
</dbReference>
<dbReference type="PROSITE" id="PS00028">
    <property type="entry name" value="ZINC_FINGER_C2H2_1"/>
    <property type="match status" value="5"/>
</dbReference>
<dbReference type="PROSITE" id="PS50157">
    <property type="entry name" value="ZINC_FINGER_C2H2_2"/>
    <property type="match status" value="5"/>
</dbReference>
<comment type="function">
    <text evidence="2">May act as an transcriptional repressor for PCK1 gene expression, in turn may participate in the hepatic gluconeogenesis regulation through the activated AMPK signaling pathway.</text>
</comment>
<comment type="subcellular location">
    <subcellularLocation>
        <location evidence="2">Nucleus</location>
    </subcellularLocation>
</comment>
<comment type="PTM">
    <text evidence="2">Phosphorylation at Ser-464 results in loss of DNA-binding activity.</text>
</comment>
<comment type="similarity">
    <text evidence="5">Belongs to the krueppel C2H2-type zinc-finger protein family.</text>
</comment>
<accession>A0JNJ4</accession>
<feature type="chain" id="PRO_0000278840" description="Zinc finger protein 692">
    <location>
        <begin position="1"/>
        <end position="510"/>
    </location>
</feature>
<feature type="zinc finger region" description="C2H2-type 1" evidence="3">
    <location>
        <begin position="322"/>
        <end position="347"/>
    </location>
</feature>
<feature type="zinc finger region" description="C2H2-type 2" evidence="3">
    <location>
        <begin position="353"/>
        <end position="377"/>
    </location>
</feature>
<feature type="zinc finger region" description="C2H2-type 3" evidence="3">
    <location>
        <begin position="383"/>
        <end position="405"/>
    </location>
</feature>
<feature type="zinc finger region" description="C2H2-type 4" evidence="3">
    <location>
        <begin position="411"/>
        <end position="433"/>
    </location>
</feature>
<feature type="zinc finger region" description="C2H2-type 5" evidence="3">
    <location>
        <begin position="442"/>
        <end position="465"/>
    </location>
</feature>
<feature type="region of interest" description="Disordered" evidence="4">
    <location>
        <begin position="1"/>
        <end position="20"/>
    </location>
</feature>
<feature type="region of interest" description="Disordered" evidence="4">
    <location>
        <begin position="121"/>
        <end position="306"/>
    </location>
</feature>
<feature type="compositionally biased region" description="Basic and acidic residues" evidence="4">
    <location>
        <begin position="163"/>
        <end position="172"/>
    </location>
</feature>
<feature type="compositionally biased region" description="Acidic residues" evidence="4">
    <location>
        <begin position="188"/>
        <end position="201"/>
    </location>
</feature>
<feature type="compositionally biased region" description="Low complexity" evidence="4">
    <location>
        <begin position="237"/>
        <end position="265"/>
    </location>
</feature>
<feature type="compositionally biased region" description="Polar residues" evidence="4">
    <location>
        <begin position="278"/>
        <end position="297"/>
    </location>
</feature>
<feature type="modified residue" description="Phosphoserine" evidence="2">
    <location>
        <position position="161"/>
    </location>
</feature>
<feature type="modified residue" description="Phosphoserine" evidence="2">
    <location>
        <position position="225"/>
    </location>
</feature>
<feature type="modified residue" description="Phosphoserine" evidence="2">
    <location>
        <position position="464"/>
    </location>
</feature>
<reference key="1">
    <citation type="submission" date="2006-10" db="EMBL/GenBank/DDBJ databases">
        <authorList>
            <consortium name="NIH - Mammalian Gene Collection (MGC) project"/>
        </authorList>
    </citation>
    <scope>NUCLEOTIDE SEQUENCE [LARGE SCALE MRNA]</scope>
    <source>
        <strain>Hereford</strain>
        <tissue>Fetal muscle</tissue>
    </source>
</reference>
<gene>
    <name evidence="2" type="primary">ZNF692</name>
    <name evidence="2" type="synonym">AREBP</name>
    <name evidence="1" type="synonym">ZFP692</name>
</gene>
<sequence>MAASPADASRRRREKRRQLDARRSKCRIRLGGHMEQWCLLKEQLGFSLHSQLAKFLLDRYTSSGCVLCAGPEPVAPKGLQYLVLLSHAHSRECSLVPGLRGPGGQDGGLVWECSAGHTFSWGPSSGPKSPEEPNLTPLPSTDERSWCPEAKSGQEPAGLESNCDERAQEARMPRGAGPPPETFPSLGEDGEEEEEDEEEMLSDASPWTYSSSPDDEPDVPKPPPSPVTHALKDGEIAPAPAAVPAPLASPSSSASSLGSGAPGPVEVRIQPELRGTPQADQQTEPLASPGSQAQSALASAWDEDTAQIGPKRIRKAAKRELLPCDFPGCGRIFSNRQYLNHHKKYQHIHQKSFSCPEPACGKSFNFKKHLKEHVKLHSDTRDYICEFCARSFRTSSNLVIHRRIHTGEKPLQCEICGFTCRQKASLNWHRRKHAETVAALRFPCEFCGKRFEKPDSVAAHRSKSHPALLLAPQELSGPVESCSSILASASLGASEGSRSTLAPQAPILLP</sequence>
<proteinExistence type="evidence at transcript level"/>
<organism>
    <name type="scientific">Bos taurus</name>
    <name type="common">Bovine</name>
    <dbReference type="NCBI Taxonomy" id="9913"/>
    <lineage>
        <taxon>Eukaryota</taxon>
        <taxon>Metazoa</taxon>
        <taxon>Chordata</taxon>
        <taxon>Craniata</taxon>
        <taxon>Vertebrata</taxon>
        <taxon>Euteleostomi</taxon>
        <taxon>Mammalia</taxon>
        <taxon>Eutheria</taxon>
        <taxon>Laurasiatheria</taxon>
        <taxon>Artiodactyla</taxon>
        <taxon>Ruminantia</taxon>
        <taxon>Pecora</taxon>
        <taxon>Bovidae</taxon>
        <taxon>Bovinae</taxon>
        <taxon>Bos</taxon>
    </lineage>
</organism>
<name>ZN692_BOVIN</name>
<evidence type="ECO:0000250" key="1">
    <source>
        <dbReference type="UniProtKB" id="Q3U381"/>
    </source>
</evidence>
<evidence type="ECO:0000250" key="2">
    <source>
        <dbReference type="UniProtKB" id="Q9BU19"/>
    </source>
</evidence>
<evidence type="ECO:0000255" key="3">
    <source>
        <dbReference type="PROSITE-ProRule" id="PRU00042"/>
    </source>
</evidence>
<evidence type="ECO:0000256" key="4">
    <source>
        <dbReference type="SAM" id="MobiDB-lite"/>
    </source>
</evidence>
<evidence type="ECO:0000305" key="5"/>